<keyword id="KW-0963">Cytoplasm</keyword>
<keyword id="KW-0342">GTP-binding</keyword>
<keyword id="KW-0378">Hydrolase</keyword>
<keyword id="KW-0460">Magnesium</keyword>
<keyword id="KW-0479">Metal-binding</keyword>
<keyword id="KW-0547">Nucleotide-binding</keyword>
<keyword id="KW-0630">Potassium</keyword>
<keyword id="KW-1185">Reference proteome</keyword>
<keyword id="KW-0819">tRNA processing</keyword>
<sequence length="442" mass="48322">MSEIASLQDTIFALSSGRLPSGVAVVRISGPKVRFVLETIVGSIPTPRYAAYKLFRSRNGDPIDRGLALFFPGPNSFTGEDCAEFHLHGGKAVVEKLLSEMGELHGCRIAEAGEFTRRAFSNGKMDLTIAEGLADLIAAETEGQRRLALQVASGTQRELYTEWRQRLLRARAFIEAELDFADESDVPGSVSEQVWQSLALLKSEIENHIASGKRASMLRDGLHVVIVGAPNAGKSSLLNFLAGREVAIISEEAGTTRDLLEVKLDLGGIPVYVTDTAGLRETDSSVEKIGIERARARMADADLVLLLEDMNDPIAVASDEIPEALWKIGTKADLNAESADCWTYRISTKTGEGLDQLLTNLQNFAEEQIGQIEDAVPTRQRHINLLRSTVTEIDRAINGTNLPLELRAENMRLASQYLGRITGDVDVEEILDVIFSQFCIGK</sequence>
<dbReference type="EC" id="3.6.-.-" evidence="1"/>
<dbReference type="EMBL" id="CP000758">
    <property type="protein sequence ID" value="ABS13580.1"/>
    <property type="molecule type" value="Genomic_DNA"/>
</dbReference>
<dbReference type="RefSeq" id="WP_012091072.1">
    <property type="nucleotide sequence ID" value="NC_009667.1"/>
</dbReference>
<dbReference type="SMR" id="A6WX76"/>
<dbReference type="STRING" id="439375.Oant_0858"/>
<dbReference type="KEGG" id="oan:Oant_0858"/>
<dbReference type="PATRIC" id="fig|439375.7.peg.903"/>
<dbReference type="eggNOG" id="COG0486">
    <property type="taxonomic scope" value="Bacteria"/>
</dbReference>
<dbReference type="HOGENOM" id="CLU_019624_3_1_5"/>
<dbReference type="PhylomeDB" id="A6WX76"/>
<dbReference type="Proteomes" id="UP000002301">
    <property type="component" value="Chromosome 1"/>
</dbReference>
<dbReference type="GO" id="GO:0005737">
    <property type="term" value="C:cytoplasm"/>
    <property type="evidence" value="ECO:0007669"/>
    <property type="project" value="UniProtKB-SubCell"/>
</dbReference>
<dbReference type="GO" id="GO:0005525">
    <property type="term" value="F:GTP binding"/>
    <property type="evidence" value="ECO:0007669"/>
    <property type="project" value="UniProtKB-UniRule"/>
</dbReference>
<dbReference type="GO" id="GO:0003924">
    <property type="term" value="F:GTPase activity"/>
    <property type="evidence" value="ECO:0007669"/>
    <property type="project" value="UniProtKB-UniRule"/>
</dbReference>
<dbReference type="GO" id="GO:0046872">
    <property type="term" value="F:metal ion binding"/>
    <property type="evidence" value="ECO:0007669"/>
    <property type="project" value="UniProtKB-KW"/>
</dbReference>
<dbReference type="GO" id="GO:0030488">
    <property type="term" value="P:tRNA methylation"/>
    <property type="evidence" value="ECO:0007669"/>
    <property type="project" value="TreeGrafter"/>
</dbReference>
<dbReference type="GO" id="GO:0002098">
    <property type="term" value="P:tRNA wobble uridine modification"/>
    <property type="evidence" value="ECO:0007669"/>
    <property type="project" value="TreeGrafter"/>
</dbReference>
<dbReference type="CDD" id="cd04164">
    <property type="entry name" value="trmE"/>
    <property type="match status" value="1"/>
</dbReference>
<dbReference type="CDD" id="cd14858">
    <property type="entry name" value="TrmE_N"/>
    <property type="match status" value="1"/>
</dbReference>
<dbReference type="FunFam" id="3.30.1360.120:FF:000007">
    <property type="entry name" value="tRNA modification GTPase GTPBP3, mitochondrial"/>
    <property type="match status" value="1"/>
</dbReference>
<dbReference type="Gene3D" id="3.40.50.300">
    <property type="entry name" value="P-loop containing nucleotide triphosphate hydrolases"/>
    <property type="match status" value="1"/>
</dbReference>
<dbReference type="Gene3D" id="3.30.1360.120">
    <property type="entry name" value="Probable tRNA modification gtpase trme, domain 1"/>
    <property type="match status" value="1"/>
</dbReference>
<dbReference type="Gene3D" id="1.20.120.430">
    <property type="entry name" value="tRNA modification GTPase MnmE domain 2"/>
    <property type="match status" value="1"/>
</dbReference>
<dbReference type="HAMAP" id="MF_00379">
    <property type="entry name" value="GTPase_MnmE"/>
    <property type="match status" value="1"/>
</dbReference>
<dbReference type="InterPro" id="IPR031168">
    <property type="entry name" value="G_TrmE"/>
</dbReference>
<dbReference type="InterPro" id="IPR006073">
    <property type="entry name" value="GTP-bd"/>
</dbReference>
<dbReference type="InterPro" id="IPR018948">
    <property type="entry name" value="GTP-bd_TrmE_N"/>
</dbReference>
<dbReference type="InterPro" id="IPR004520">
    <property type="entry name" value="GTPase_MnmE"/>
</dbReference>
<dbReference type="InterPro" id="IPR027368">
    <property type="entry name" value="MnmE_dom2"/>
</dbReference>
<dbReference type="InterPro" id="IPR025867">
    <property type="entry name" value="MnmE_helical"/>
</dbReference>
<dbReference type="InterPro" id="IPR027417">
    <property type="entry name" value="P-loop_NTPase"/>
</dbReference>
<dbReference type="InterPro" id="IPR005225">
    <property type="entry name" value="Small_GTP-bd"/>
</dbReference>
<dbReference type="InterPro" id="IPR027266">
    <property type="entry name" value="TrmE/GcvT_dom1"/>
</dbReference>
<dbReference type="NCBIfam" id="TIGR00450">
    <property type="entry name" value="mnmE_trmE_thdF"/>
    <property type="match status" value="1"/>
</dbReference>
<dbReference type="NCBIfam" id="NF003661">
    <property type="entry name" value="PRK05291.1-3"/>
    <property type="match status" value="1"/>
</dbReference>
<dbReference type="NCBIfam" id="TIGR00231">
    <property type="entry name" value="small_GTP"/>
    <property type="match status" value="1"/>
</dbReference>
<dbReference type="PANTHER" id="PTHR42714">
    <property type="entry name" value="TRNA MODIFICATION GTPASE GTPBP3"/>
    <property type="match status" value="1"/>
</dbReference>
<dbReference type="PANTHER" id="PTHR42714:SF2">
    <property type="entry name" value="TRNA MODIFICATION GTPASE GTPBP3, MITOCHONDRIAL"/>
    <property type="match status" value="1"/>
</dbReference>
<dbReference type="Pfam" id="PF01926">
    <property type="entry name" value="MMR_HSR1"/>
    <property type="match status" value="1"/>
</dbReference>
<dbReference type="Pfam" id="PF12631">
    <property type="entry name" value="MnmE_helical"/>
    <property type="match status" value="1"/>
</dbReference>
<dbReference type="Pfam" id="PF10396">
    <property type="entry name" value="TrmE_N"/>
    <property type="match status" value="1"/>
</dbReference>
<dbReference type="SUPFAM" id="SSF52540">
    <property type="entry name" value="P-loop containing nucleoside triphosphate hydrolases"/>
    <property type="match status" value="1"/>
</dbReference>
<dbReference type="SUPFAM" id="SSF116878">
    <property type="entry name" value="TrmE connector domain"/>
    <property type="match status" value="1"/>
</dbReference>
<dbReference type="PROSITE" id="PS51709">
    <property type="entry name" value="G_TRME"/>
    <property type="match status" value="1"/>
</dbReference>
<feature type="chain" id="PRO_0000345857" description="tRNA modification GTPase MnmE">
    <location>
        <begin position="1"/>
        <end position="442"/>
    </location>
</feature>
<feature type="domain" description="TrmE-type G">
    <location>
        <begin position="221"/>
        <end position="366"/>
    </location>
</feature>
<feature type="binding site" evidence="1">
    <location>
        <position position="27"/>
    </location>
    <ligand>
        <name>(6S)-5-formyl-5,6,7,8-tetrahydrofolate</name>
        <dbReference type="ChEBI" id="CHEBI:57457"/>
    </ligand>
</feature>
<feature type="binding site" evidence="1">
    <location>
        <position position="84"/>
    </location>
    <ligand>
        <name>(6S)-5-formyl-5,6,7,8-tetrahydrofolate</name>
        <dbReference type="ChEBI" id="CHEBI:57457"/>
    </ligand>
</feature>
<feature type="binding site" evidence="1">
    <location>
        <position position="124"/>
    </location>
    <ligand>
        <name>(6S)-5-formyl-5,6,7,8-tetrahydrofolate</name>
        <dbReference type="ChEBI" id="CHEBI:57457"/>
    </ligand>
</feature>
<feature type="binding site" evidence="1">
    <location>
        <begin position="231"/>
        <end position="236"/>
    </location>
    <ligand>
        <name>GTP</name>
        <dbReference type="ChEBI" id="CHEBI:37565"/>
    </ligand>
</feature>
<feature type="binding site" evidence="1">
    <location>
        <position position="235"/>
    </location>
    <ligand>
        <name>Mg(2+)</name>
        <dbReference type="ChEBI" id="CHEBI:18420"/>
    </ligand>
</feature>
<feature type="binding site" evidence="1">
    <location>
        <begin position="250"/>
        <end position="256"/>
    </location>
    <ligand>
        <name>GTP</name>
        <dbReference type="ChEBI" id="CHEBI:37565"/>
    </ligand>
</feature>
<feature type="binding site" evidence="1">
    <location>
        <position position="256"/>
    </location>
    <ligand>
        <name>Mg(2+)</name>
        <dbReference type="ChEBI" id="CHEBI:18420"/>
    </ligand>
</feature>
<feature type="binding site" evidence="1">
    <location>
        <begin position="275"/>
        <end position="278"/>
    </location>
    <ligand>
        <name>GTP</name>
        <dbReference type="ChEBI" id="CHEBI:37565"/>
    </ligand>
</feature>
<feature type="binding site" evidence="1">
    <location>
        <position position="442"/>
    </location>
    <ligand>
        <name>(6S)-5-formyl-5,6,7,8-tetrahydrofolate</name>
        <dbReference type="ChEBI" id="CHEBI:57457"/>
    </ligand>
</feature>
<reference key="1">
    <citation type="journal article" date="2011" name="J. Bacteriol.">
        <title>Genome of Ochrobactrum anthropi ATCC 49188 T, a versatile opportunistic pathogen and symbiont of several eukaryotic hosts.</title>
        <authorList>
            <person name="Chain P.S."/>
            <person name="Lang D.M."/>
            <person name="Comerci D.J."/>
            <person name="Malfatti S.A."/>
            <person name="Vergez L.M."/>
            <person name="Shin M."/>
            <person name="Ugalde R.A."/>
            <person name="Garcia E."/>
            <person name="Tolmasky M.E."/>
        </authorList>
    </citation>
    <scope>NUCLEOTIDE SEQUENCE [LARGE SCALE GENOMIC DNA]</scope>
    <source>
        <strain>ATCC 49188 / DSM 6882 / CCUG 24695 / JCM 21032 / LMG 3331 / NBRC 15819 / NCTC 12168 / Alc 37</strain>
    </source>
</reference>
<comment type="function">
    <text evidence="1">Exhibits a very high intrinsic GTPase hydrolysis rate. Involved in the addition of a carboxymethylaminomethyl (cmnm) group at the wobble position (U34) of certain tRNAs, forming tRNA-cmnm(5)s(2)U34.</text>
</comment>
<comment type="cofactor">
    <cofactor evidence="1">
        <name>K(+)</name>
        <dbReference type="ChEBI" id="CHEBI:29103"/>
    </cofactor>
    <text evidence="1">Binds 1 potassium ion per subunit.</text>
</comment>
<comment type="subunit">
    <text evidence="1">Homodimer. Heterotetramer of two MnmE and two MnmG subunits.</text>
</comment>
<comment type="subcellular location">
    <subcellularLocation>
        <location evidence="1">Cytoplasm</location>
    </subcellularLocation>
</comment>
<comment type="similarity">
    <text evidence="1">Belongs to the TRAFAC class TrmE-Era-EngA-EngB-Septin-like GTPase superfamily. TrmE GTPase family.</text>
</comment>
<name>MNME_BRUA4</name>
<accession>A6WX76</accession>
<gene>
    <name evidence="1" type="primary">mnmE</name>
    <name evidence="1" type="synonym">trmE</name>
    <name type="ordered locus">Oant_0858</name>
</gene>
<evidence type="ECO:0000255" key="1">
    <source>
        <dbReference type="HAMAP-Rule" id="MF_00379"/>
    </source>
</evidence>
<protein>
    <recommendedName>
        <fullName evidence="1">tRNA modification GTPase MnmE</fullName>
        <ecNumber evidence="1">3.6.-.-</ecNumber>
    </recommendedName>
</protein>
<proteinExistence type="inferred from homology"/>
<organism>
    <name type="scientific">Brucella anthropi (strain ATCC 49188 / DSM 6882 / CCUG 24695 / JCM 21032 / LMG 3331 / NBRC 15819 / NCTC 12168 / Alc 37)</name>
    <name type="common">Ochrobactrum anthropi</name>
    <dbReference type="NCBI Taxonomy" id="439375"/>
    <lineage>
        <taxon>Bacteria</taxon>
        <taxon>Pseudomonadati</taxon>
        <taxon>Pseudomonadota</taxon>
        <taxon>Alphaproteobacteria</taxon>
        <taxon>Hyphomicrobiales</taxon>
        <taxon>Brucellaceae</taxon>
        <taxon>Brucella/Ochrobactrum group</taxon>
        <taxon>Brucella</taxon>
    </lineage>
</organism>